<sequence>MAFDKDAFLTALDSMSVMELNDLVKAIEEKFGVSAAAMAAPAAGGGAAAGGAAAEEKTEFNVVLAEAGSNKVAVIKAVREITGLGLKEAKDLVDGAPKNVKEGIAKADAEAAVKKLVEAGAKAELK</sequence>
<accession>A1TVT1</accession>
<proteinExistence type="inferred from homology"/>
<gene>
    <name evidence="1" type="primary">rplL</name>
    <name type="ordered locus">Aave_4532</name>
</gene>
<reference key="1">
    <citation type="submission" date="2006-12" db="EMBL/GenBank/DDBJ databases">
        <title>Complete sequence of Acidovorax avenae subsp. citrulli AAC00-1.</title>
        <authorList>
            <person name="Copeland A."/>
            <person name="Lucas S."/>
            <person name="Lapidus A."/>
            <person name="Barry K."/>
            <person name="Detter J.C."/>
            <person name="Glavina del Rio T."/>
            <person name="Dalin E."/>
            <person name="Tice H."/>
            <person name="Pitluck S."/>
            <person name="Kiss H."/>
            <person name="Brettin T."/>
            <person name="Bruce D."/>
            <person name="Han C."/>
            <person name="Tapia R."/>
            <person name="Gilna P."/>
            <person name="Schmutz J."/>
            <person name="Larimer F."/>
            <person name="Land M."/>
            <person name="Hauser L."/>
            <person name="Kyrpides N."/>
            <person name="Kim E."/>
            <person name="Stahl D."/>
            <person name="Richardson P."/>
        </authorList>
    </citation>
    <scope>NUCLEOTIDE SEQUENCE [LARGE SCALE GENOMIC DNA]</scope>
    <source>
        <strain>AAC00-1</strain>
    </source>
</reference>
<comment type="function">
    <text evidence="1">Forms part of the ribosomal stalk which helps the ribosome interact with GTP-bound translation factors. Is thus essential for accurate translation.</text>
</comment>
<comment type="subunit">
    <text evidence="1">Homodimer. Part of the ribosomal stalk of the 50S ribosomal subunit. Forms a multimeric L10(L12)X complex, where L10 forms an elongated spine to which 2 to 4 L12 dimers bind in a sequential fashion. Binds GTP-bound translation factors.</text>
</comment>
<comment type="similarity">
    <text evidence="1">Belongs to the bacterial ribosomal protein bL12 family.</text>
</comment>
<evidence type="ECO:0000255" key="1">
    <source>
        <dbReference type="HAMAP-Rule" id="MF_00368"/>
    </source>
</evidence>
<evidence type="ECO:0000305" key="2"/>
<keyword id="KW-0687">Ribonucleoprotein</keyword>
<keyword id="KW-0689">Ribosomal protein</keyword>
<organism>
    <name type="scientific">Paracidovorax citrulli (strain AAC00-1)</name>
    <name type="common">Acidovorax citrulli</name>
    <dbReference type="NCBI Taxonomy" id="397945"/>
    <lineage>
        <taxon>Bacteria</taxon>
        <taxon>Pseudomonadati</taxon>
        <taxon>Pseudomonadota</taxon>
        <taxon>Betaproteobacteria</taxon>
        <taxon>Burkholderiales</taxon>
        <taxon>Comamonadaceae</taxon>
        <taxon>Paracidovorax</taxon>
    </lineage>
</organism>
<name>RL7_PARC0</name>
<dbReference type="EMBL" id="CP000512">
    <property type="protein sequence ID" value="ABM35069.1"/>
    <property type="molecule type" value="Genomic_DNA"/>
</dbReference>
<dbReference type="RefSeq" id="WP_011797538.1">
    <property type="nucleotide sequence ID" value="NC_008752.1"/>
</dbReference>
<dbReference type="SMR" id="A1TVT1"/>
<dbReference type="STRING" id="397945.Aave_4532"/>
<dbReference type="GeneID" id="79789511"/>
<dbReference type="KEGG" id="aav:Aave_4532"/>
<dbReference type="eggNOG" id="COG0222">
    <property type="taxonomic scope" value="Bacteria"/>
</dbReference>
<dbReference type="HOGENOM" id="CLU_086499_3_2_4"/>
<dbReference type="OrthoDB" id="9811748at2"/>
<dbReference type="Proteomes" id="UP000002596">
    <property type="component" value="Chromosome"/>
</dbReference>
<dbReference type="GO" id="GO:0022625">
    <property type="term" value="C:cytosolic large ribosomal subunit"/>
    <property type="evidence" value="ECO:0007669"/>
    <property type="project" value="TreeGrafter"/>
</dbReference>
<dbReference type="GO" id="GO:0003729">
    <property type="term" value="F:mRNA binding"/>
    <property type="evidence" value="ECO:0007669"/>
    <property type="project" value="TreeGrafter"/>
</dbReference>
<dbReference type="GO" id="GO:0003735">
    <property type="term" value="F:structural constituent of ribosome"/>
    <property type="evidence" value="ECO:0007669"/>
    <property type="project" value="InterPro"/>
</dbReference>
<dbReference type="GO" id="GO:0006412">
    <property type="term" value="P:translation"/>
    <property type="evidence" value="ECO:0007669"/>
    <property type="project" value="UniProtKB-UniRule"/>
</dbReference>
<dbReference type="CDD" id="cd00387">
    <property type="entry name" value="Ribosomal_L7_L12"/>
    <property type="match status" value="1"/>
</dbReference>
<dbReference type="FunFam" id="3.30.1390.10:FF:000001">
    <property type="entry name" value="50S ribosomal protein L7/L12"/>
    <property type="match status" value="1"/>
</dbReference>
<dbReference type="Gene3D" id="3.30.1390.10">
    <property type="match status" value="1"/>
</dbReference>
<dbReference type="Gene3D" id="1.20.5.710">
    <property type="entry name" value="Single helix bin"/>
    <property type="match status" value="1"/>
</dbReference>
<dbReference type="HAMAP" id="MF_00368">
    <property type="entry name" value="Ribosomal_bL12"/>
    <property type="match status" value="1"/>
</dbReference>
<dbReference type="InterPro" id="IPR000206">
    <property type="entry name" value="Ribosomal_bL12"/>
</dbReference>
<dbReference type="InterPro" id="IPR013823">
    <property type="entry name" value="Ribosomal_bL12_C"/>
</dbReference>
<dbReference type="InterPro" id="IPR014719">
    <property type="entry name" value="Ribosomal_bL12_C/ClpS-like"/>
</dbReference>
<dbReference type="InterPro" id="IPR008932">
    <property type="entry name" value="Ribosomal_bL12_oligo"/>
</dbReference>
<dbReference type="InterPro" id="IPR036235">
    <property type="entry name" value="Ribosomal_bL12_oligo_N_sf"/>
</dbReference>
<dbReference type="NCBIfam" id="TIGR00855">
    <property type="entry name" value="L12"/>
    <property type="match status" value="1"/>
</dbReference>
<dbReference type="PANTHER" id="PTHR45987">
    <property type="entry name" value="39S RIBOSOMAL PROTEIN L12"/>
    <property type="match status" value="1"/>
</dbReference>
<dbReference type="PANTHER" id="PTHR45987:SF4">
    <property type="entry name" value="LARGE RIBOSOMAL SUBUNIT PROTEIN BL12M"/>
    <property type="match status" value="1"/>
</dbReference>
<dbReference type="Pfam" id="PF00542">
    <property type="entry name" value="Ribosomal_L12"/>
    <property type="match status" value="1"/>
</dbReference>
<dbReference type="Pfam" id="PF16320">
    <property type="entry name" value="Ribosomal_L12_N"/>
    <property type="match status" value="1"/>
</dbReference>
<dbReference type="SUPFAM" id="SSF54736">
    <property type="entry name" value="ClpS-like"/>
    <property type="match status" value="1"/>
</dbReference>
<dbReference type="SUPFAM" id="SSF48300">
    <property type="entry name" value="Ribosomal protein L7/12, oligomerisation (N-terminal) domain"/>
    <property type="match status" value="1"/>
</dbReference>
<protein>
    <recommendedName>
        <fullName evidence="1">Large ribosomal subunit protein bL12</fullName>
    </recommendedName>
    <alternativeName>
        <fullName evidence="2">50S ribosomal protein L7/L12</fullName>
    </alternativeName>
</protein>
<feature type="chain" id="PRO_1000006946" description="Large ribosomal subunit protein bL12">
    <location>
        <begin position="1"/>
        <end position="126"/>
    </location>
</feature>